<feature type="chain" id="PRO_0000222050" description="Enzymatic polyprotein">
    <location>
        <begin position="1"/>
        <end position="679"/>
    </location>
</feature>
<feature type="domain" description="Reverse transcriptase" evidence="2">
    <location>
        <begin position="272"/>
        <end position="452"/>
    </location>
</feature>
<feature type="region of interest" description="Protease" evidence="1">
    <location>
        <begin position="40"/>
        <end position="130"/>
    </location>
</feature>
<feature type="active site">
    <location>
        <position position="45"/>
    </location>
</feature>
<dbReference type="EC" id="3.4.23.-"/>
<dbReference type="EC" id="2.7.7.49"/>
<dbReference type="EMBL" id="V00140">
    <property type="status" value="NOT_ANNOTATED_CDS"/>
    <property type="molecule type" value="Genomic_DNA"/>
</dbReference>
<dbReference type="SMR" id="P03555"/>
<dbReference type="Proteomes" id="UP000008438">
    <property type="component" value="Genome"/>
</dbReference>
<dbReference type="GO" id="GO:0004190">
    <property type="term" value="F:aspartic-type endopeptidase activity"/>
    <property type="evidence" value="ECO:0007669"/>
    <property type="project" value="UniProtKB-KW"/>
</dbReference>
<dbReference type="GO" id="GO:0004519">
    <property type="term" value="F:endonuclease activity"/>
    <property type="evidence" value="ECO:0007669"/>
    <property type="project" value="UniProtKB-KW"/>
</dbReference>
<dbReference type="GO" id="GO:0003964">
    <property type="term" value="F:RNA-directed DNA polymerase activity"/>
    <property type="evidence" value="ECO:0007669"/>
    <property type="project" value="UniProtKB-KW"/>
</dbReference>
<dbReference type="GO" id="GO:0006508">
    <property type="term" value="P:proteolysis"/>
    <property type="evidence" value="ECO:0007669"/>
    <property type="project" value="UniProtKB-KW"/>
</dbReference>
<dbReference type="CDD" id="cd00303">
    <property type="entry name" value="retropepsin_like"/>
    <property type="match status" value="1"/>
</dbReference>
<dbReference type="CDD" id="cd09274">
    <property type="entry name" value="RNase_HI_RT_Ty3"/>
    <property type="match status" value="1"/>
</dbReference>
<dbReference type="CDD" id="cd01647">
    <property type="entry name" value="RT_LTR"/>
    <property type="match status" value="1"/>
</dbReference>
<dbReference type="Gene3D" id="3.30.70.270">
    <property type="match status" value="2"/>
</dbReference>
<dbReference type="Gene3D" id="2.40.70.10">
    <property type="entry name" value="Acid Proteases"/>
    <property type="match status" value="1"/>
</dbReference>
<dbReference type="Gene3D" id="3.10.10.10">
    <property type="entry name" value="HIV Type 1 Reverse Transcriptase, subunit A, domain 1"/>
    <property type="match status" value="1"/>
</dbReference>
<dbReference type="InterPro" id="IPR043502">
    <property type="entry name" value="DNA/RNA_pol_sf"/>
</dbReference>
<dbReference type="InterPro" id="IPR000588">
    <property type="entry name" value="Pept_A3A"/>
</dbReference>
<dbReference type="InterPro" id="IPR021109">
    <property type="entry name" value="Peptidase_aspartic_dom_sf"/>
</dbReference>
<dbReference type="InterPro" id="IPR043128">
    <property type="entry name" value="Rev_trsase/Diguanyl_cyclase"/>
</dbReference>
<dbReference type="InterPro" id="IPR000477">
    <property type="entry name" value="RT_dom"/>
</dbReference>
<dbReference type="InterPro" id="IPR041373">
    <property type="entry name" value="RT_RNaseH"/>
</dbReference>
<dbReference type="InterPro" id="IPR051320">
    <property type="entry name" value="Viral_Replic_Matur_Polypro"/>
</dbReference>
<dbReference type="PANTHER" id="PTHR33064">
    <property type="entry name" value="POL PROTEIN"/>
    <property type="match status" value="1"/>
</dbReference>
<dbReference type="PANTHER" id="PTHR33064:SF37">
    <property type="entry name" value="RIBONUCLEASE H"/>
    <property type="match status" value="1"/>
</dbReference>
<dbReference type="Pfam" id="PF02160">
    <property type="entry name" value="Peptidase_A3"/>
    <property type="match status" value="1"/>
</dbReference>
<dbReference type="Pfam" id="PF17917">
    <property type="entry name" value="RT_RNaseH"/>
    <property type="match status" value="1"/>
</dbReference>
<dbReference type="Pfam" id="PF00078">
    <property type="entry name" value="RVT_1"/>
    <property type="match status" value="1"/>
</dbReference>
<dbReference type="PRINTS" id="PR00731">
    <property type="entry name" value="CAULIMOPTASE"/>
</dbReference>
<dbReference type="SUPFAM" id="SSF56672">
    <property type="entry name" value="DNA/RNA polymerases"/>
    <property type="match status" value="1"/>
</dbReference>
<dbReference type="PROSITE" id="PS50878">
    <property type="entry name" value="RT_POL"/>
    <property type="match status" value="1"/>
</dbReference>
<evidence type="ECO:0000250" key="1"/>
<evidence type="ECO:0000255" key="2">
    <source>
        <dbReference type="PROSITE-ProRule" id="PRU00405"/>
    </source>
</evidence>
<evidence type="ECO:0000305" key="3"/>
<protein>
    <recommendedName>
        <fullName>Enzymatic polyprotein</fullName>
    </recommendedName>
    <domain>
        <recommendedName>
            <fullName>Aspartic protease</fullName>
            <ecNumber>3.4.23.-</ecNumber>
        </recommendedName>
    </domain>
    <domain>
        <recommendedName>
            <fullName>Endonuclease</fullName>
        </recommendedName>
    </domain>
    <domain>
        <recommendedName>
            <fullName>Reverse transcriptase</fullName>
            <ecNumber>2.7.7.49</ecNumber>
        </recommendedName>
    </domain>
</protein>
<keyword id="KW-0064">Aspartyl protease</keyword>
<keyword id="KW-0255">Endonuclease</keyword>
<keyword id="KW-0378">Hydrolase</keyword>
<keyword id="KW-0540">Nuclease</keyword>
<keyword id="KW-0548">Nucleotidyltransferase</keyword>
<keyword id="KW-0645">Protease</keyword>
<keyword id="KW-0695">RNA-directed DNA polymerase</keyword>
<keyword id="KW-0808">Transferase</keyword>
<name>POL_CAMVC</name>
<sequence length="679" mass="78669">MDHLLLKTQTQIEQVMNVTNPNSIYIKGRLYFKGYKKIELHCFVDTGASLCIASKFVIPEEHWVNAERPIMVKIADGSSITISKVCKDIDLIIAGEIFKIPTVYQQESGIDFIIGNNFCQLYEPFIQFTDRVIFTKNKSYPVHITKLTRAVRVGIEGFLESMKKRSKTQQPEPVNISTNKIENPLEEIAILSEGRRLSEEKLFITQQRMQKIEELLEKVCSENPLDPNKTKQWMKASIKLSDPSKAIKVKPMKYSPMDREEFDKQIKELLDLKVIKPSKSPHMAPAFLVNNEAEKRRGKKRMVVNYKAMNKATIGDAYNLPNKDELLTLIRGKKIFSSFDCKSGFWQVLLDQESRPLTAFTCPQGHYEWNVVPFGLKQAPSIFQRHMDEAFRVFRKFCCVYVDDILVFSNNEEDHLLHVAMILQKCNQHGIILSKKKAQLFKKKINFLGLEIDEGTHKPQGHILEHINKFPDTLEDKKQLQRFLGILTYASDYIPKLAQIRKPLQAKLKENVPWKWTKEDTLYMQKVKKNLQGFPPLHHPLPEEKLIIETDASDDYWGGMLKAIKINEGTNTELICRYASGSFKAAERNYHSNDKETLAVINTIKKFSIYLTPVHFLIRTDNTHFKSFVNLNYKGDSKLGRNIRWQAWLSHYSFDVEHIKGTDNHFADFLSREFNKVNS</sequence>
<organism>
    <name type="scientific">Cauliflower mosaic virus (strain CM-1841)</name>
    <name type="common">CaMV</name>
    <dbReference type="NCBI Taxonomy" id="10644"/>
    <lineage>
        <taxon>Viruses</taxon>
        <taxon>Riboviria</taxon>
        <taxon>Pararnavirae</taxon>
        <taxon>Artverviricota</taxon>
        <taxon>Revtraviricetes</taxon>
        <taxon>Ortervirales</taxon>
        <taxon>Caulimoviridae</taxon>
        <taxon>Caulimovirus</taxon>
        <taxon>Caulimovirus tessellobrassicae</taxon>
    </lineage>
</organism>
<reference key="1">
    <citation type="journal article" date="1981" name="Nucleic Acids Res.">
        <title>The complete nucleotide sequence of an infectious clone of cauliflower mosaic virus by M13mp7 shotgun sequencing.</title>
        <authorList>
            <person name="Gardner R.C."/>
            <person name="Howarth A.J."/>
            <person name="Hahn P."/>
            <person name="Brown-Luedi M."/>
            <person name="Shepherd R.J."/>
            <person name="Messing J."/>
        </authorList>
    </citation>
    <scope>NUCLEOTIDE SEQUENCE [GENOMIC DNA]</scope>
</reference>
<comment type="function">
    <text evidence="1">Encodes for at least two polypeptides: protease (PR) and reverse transcriptase (RT). The protease processes the polyprotein in cis. Reverse transcriptase is multifunctional enzyme that converts the viral RNA genome into dsDNA in viral cytoplasmic capsids. This enzyme displays a DNA polymerase activity that can copy either DNA or RNA templates, and a ribonuclease H (RNase H) activity that cleaves the RNA strand of RNA-DNA heteroduplexes in a partially processive 3'- to 5'-endonucleasic mode. Neo-synthesized pregenomic RNA (pgRNA) are encapsidated, and reverse-transcribed inside the nucleocapsid. Partial (+)DNA is synthesized from the (-)DNA template and generates the relaxed circular DNA (RC-DNA) genome. After budding and infection, the RC-DNA migrates in the nucleus, and is converted into a plasmid-like covalently closed circular DNA (cccDNA) (By similarity).</text>
</comment>
<comment type="catalytic activity">
    <reaction evidence="2">
        <text>DNA(n) + a 2'-deoxyribonucleoside 5'-triphosphate = DNA(n+1) + diphosphate</text>
        <dbReference type="Rhea" id="RHEA:22508"/>
        <dbReference type="Rhea" id="RHEA-COMP:17339"/>
        <dbReference type="Rhea" id="RHEA-COMP:17340"/>
        <dbReference type="ChEBI" id="CHEBI:33019"/>
        <dbReference type="ChEBI" id="CHEBI:61560"/>
        <dbReference type="ChEBI" id="CHEBI:173112"/>
        <dbReference type="EC" id="2.7.7.49"/>
    </reaction>
</comment>
<comment type="domain">
    <text evidence="1">The polymerase/reverse transcriptase (RT) and ribonuclease H (RH) domains are structured in five subdomains: finger, palm, thumb, connection and RNase H. Within the palm subdomain, the 'primer grip' region is thought to be involved in the positioning of the primer terminus for accommodating the incoming nucleotide. The RH domain stabilizes the association of RT with primer-template (By similarity).</text>
</comment>
<comment type="similarity">
    <text evidence="3">Belongs to the caulimoviridae enzymatic polyprotein family.</text>
</comment>
<organismHost>
    <name type="scientific">Arabidopsis thaliana</name>
    <name type="common">Mouse-ear cress</name>
    <dbReference type="NCBI Taxonomy" id="3702"/>
</organismHost>
<organismHost>
    <name type="scientific">Brassica</name>
    <dbReference type="NCBI Taxonomy" id="3705"/>
</organismHost>
<organismHost>
    <name type="scientific">Raphanus</name>
    <dbReference type="NCBI Taxonomy" id="3725"/>
</organismHost>
<proteinExistence type="inferred from homology"/>
<gene>
    <name type="ORF">ORF V</name>
</gene>
<accession>P03555</accession>